<protein>
    <recommendedName>
        <fullName evidence="1">UPF0291 protein MGAS10270_Spy1502</fullName>
    </recommendedName>
</protein>
<reference key="1">
    <citation type="journal article" date="2006" name="Proc. Natl. Acad. Sci. U.S.A.">
        <title>Molecular genetic anatomy of inter- and intraserotype variation in the human bacterial pathogen group A Streptococcus.</title>
        <authorList>
            <person name="Beres S.B."/>
            <person name="Richter E.W."/>
            <person name="Nagiec M.J."/>
            <person name="Sumby P."/>
            <person name="Porcella S.F."/>
            <person name="DeLeo F.R."/>
            <person name="Musser J.M."/>
        </authorList>
    </citation>
    <scope>NUCLEOTIDE SEQUENCE [LARGE SCALE GENOMIC DNA]</scope>
    <source>
        <strain>MGAS10270</strain>
    </source>
</reference>
<keyword id="KW-0963">Cytoplasm</keyword>
<proteinExistence type="inferred from homology"/>
<comment type="subcellular location">
    <subcellularLocation>
        <location evidence="1">Cytoplasm</location>
    </subcellularLocation>
</comment>
<comment type="similarity">
    <text evidence="1">Belongs to the UPF0291 family.</text>
</comment>
<dbReference type="EMBL" id="CP000260">
    <property type="protein sequence ID" value="ABF34567.1"/>
    <property type="molecule type" value="Genomic_DNA"/>
</dbReference>
<dbReference type="RefSeq" id="WP_002983550.1">
    <property type="nucleotide sequence ID" value="NZ_CVUH01000010.1"/>
</dbReference>
<dbReference type="SMR" id="Q1JFJ2"/>
<dbReference type="KEGG" id="sph:MGAS10270_Spy1502"/>
<dbReference type="HOGENOM" id="CLU_173137_0_2_9"/>
<dbReference type="Proteomes" id="UP000002436">
    <property type="component" value="Chromosome"/>
</dbReference>
<dbReference type="GO" id="GO:0005737">
    <property type="term" value="C:cytoplasm"/>
    <property type="evidence" value="ECO:0007669"/>
    <property type="project" value="UniProtKB-SubCell"/>
</dbReference>
<dbReference type="Gene3D" id="1.10.287.540">
    <property type="entry name" value="Helix hairpin bin"/>
    <property type="match status" value="1"/>
</dbReference>
<dbReference type="HAMAP" id="MF_01103">
    <property type="entry name" value="UPF0291"/>
    <property type="match status" value="1"/>
</dbReference>
<dbReference type="InterPro" id="IPR009242">
    <property type="entry name" value="DUF896"/>
</dbReference>
<dbReference type="NCBIfam" id="NF002711">
    <property type="entry name" value="PRK02539.1"/>
    <property type="match status" value="1"/>
</dbReference>
<dbReference type="PANTHER" id="PTHR37300">
    <property type="entry name" value="UPF0291 PROTEIN CBO2609/CLC_2481"/>
    <property type="match status" value="1"/>
</dbReference>
<dbReference type="PANTHER" id="PTHR37300:SF1">
    <property type="entry name" value="UPF0291 PROTEIN YNZC"/>
    <property type="match status" value="1"/>
</dbReference>
<dbReference type="Pfam" id="PF05979">
    <property type="entry name" value="DUF896"/>
    <property type="match status" value="1"/>
</dbReference>
<dbReference type="SUPFAM" id="SSF158221">
    <property type="entry name" value="YnzC-like"/>
    <property type="match status" value="1"/>
</dbReference>
<gene>
    <name type="ordered locus">MGAS10270_Spy1502</name>
</gene>
<accession>Q1JFJ2</accession>
<feature type="chain" id="PRO_1000065032" description="UPF0291 protein MGAS10270_Spy1502">
    <location>
        <begin position="1"/>
        <end position="85"/>
    </location>
</feature>
<feature type="region of interest" description="Disordered" evidence="2">
    <location>
        <begin position="62"/>
        <end position="85"/>
    </location>
</feature>
<evidence type="ECO:0000255" key="1">
    <source>
        <dbReference type="HAMAP-Rule" id="MF_01103"/>
    </source>
</evidence>
<evidence type="ECO:0000256" key="2">
    <source>
        <dbReference type="SAM" id="MobiDB-lite"/>
    </source>
</evidence>
<organism>
    <name type="scientific">Streptococcus pyogenes serotype M2 (strain MGAS10270)</name>
    <dbReference type="NCBI Taxonomy" id="370552"/>
    <lineage>
        <taxon>Bacteria</taxon>
        <taxon>Bacillati</taxon>
        <taxon>Bacillota</taxon>
        <taxon>Bacilli</taxon>
        <taxon>Lactobacillales</taxon>
        <taxon>Streptococcaceae</taxon>
        <taxon>Streptococcus</taxon>
    </lineage>
</organism>
<name>Y1502_STRPD</name>
<sequence length="85" mass="9801">MDPKKIARINELAKKKKTVGLTGPEKVEQAKLREEYIEGYRRSVRHHIEGIKLVDEEGNDVTPEKLRQVQREKGLHGRSLDDPKS</sequence>